<evidence type="ECO:0000250" key="1"/>
<evidence type="ECO:0000255" key="2"/>
<evidence type="ECO:0000305" key="3"/>
<evidence type="ECO:0007829" key="4">
    <source>
        <dbReference type="PDB" id="1S5H"/>
    </source>
</evidence>
<reference key="1">
    <citation type="journal article" date="2002" name="Nature">
        <title>Complete genome sequence of the model actinomycete Streptomyces coelicolor A3(2).</title>
        <authorList>
            <person name="Bentley S.D."/>
            <person name="Chater K.F."/>
            <person name="Cerdeno-Tarraga A.-M."/>
            <person name="Challis G.L."/>
            <person name="Thomson N.R."/>
            <person name="James K.D."/>
            <person name="Harris D.E."/>
            <person name="Quail M.A."/>
            <person name="Kieser H."/>
            <person name="Harper D."/>
            <person name="Bateman A."/>
            <person name="Brown S."/>
            <person name="Chandra G."/>
            <person name="Chen C.W."/>
            <person name="Collins M."/>
            <person name="Cronin A."/>
            <person name="Fraser A."/>
            <person name="Goble A."/>
            <person name="Hidalgo J."/>
            <person name="Hornsby T."/>
            <person name="Howarth S."/>
            <person name="Huang C.-H."/>
            <person name="Kieser T."/>
            <person name="Larke L."/>
            <person name="Murphy L.D."/>
            <person name="Oliver K."/>
            <person name="O'Neil S."/>
            <person name="Rabbinowitsch E."/>
            <person name="Rajandream M.A."/>
            <person name="Rutherford K.M."/>
            <person name="Rutter S."/>
            <person name="Seeger K."/>
            <person name="Saunders D."/>
            <person name="Sharp S."/>
            <person name="Squares R."/>
            <person name="Squares S."/>
            <person name="Taylor K."/>
            <person name="Warren T."/>
            <person name="Wietzorrek A."/>
            <person name="Woodward J.R."/>
            <person name="Barrell B.G."/>
            <person name="Parkhill J."/>
            <person name="Hopwood D.A."/>
        </authorList>
    </citation>
    <scope>NUCLEOTIDE SEQUENCE [LARGE SCALE GENOMIC DNA]</scope>
    <source>
        <strain>ATCC BAA-471 / A3(2) / M145</strain>
    </source>
</reference>
<proteinExistence type="evidence at protein level"/>
<keyword id="KW-0002">3D-structure</keyword>
<keyword id="KW-1003">Cell membrane</keyword>
<keyword id="KW-0407">Ion channel</keyword>
<keyword id="KW-0406">Ion transport</keyword>
<keyword id="KW-0472">Membrane</keyword>
<keyword id="KW-1185">Reference proteome</keyword>
<keyword id="KW-0812">Transmembrane</keyword>
<keyword id="KW-1133">Transmembrane helix</keyword>
<keyword id="KW-0813">Transport</keyword>
<name>KCSA_STRCO</name>
<sequence length="160" mass="17694">MPPMLSGLLARLVKLLLGRHGSALHWRAAGAATVLLVIVLLAGSYLAVLAERGAPGAQLITYPRALWWSVETATTVGYGDLYPVTLWGRLVAVVVMVAGITSFGLVTAALATWFVGREQERRGHFVRHSEKAAEEAYTRTTRALHERFDRLERMLDDNRR</sequence>
<gene>
    <name type="primary">kcsA</name>
    <name type="synonym">skc1</name>
    <name type="ordered locus">SCO7660</name>
    <name type="ORF">SC10F4.33</name>
</gene>
<organism>
    <name type="scientific">Streptomyces coelicolor (strain ATCC BAA-471 / A3(2) / M145)</name>
    <dbReference type="NCBI Taxonomy" id="100226"/>
    <lineage>
        <taxon>Bacteria</taxon>
        <taxon>Bacillati</taxon>
        <taxon>Actinomycetota</taxon>
        <taxon>Actinomycetes</taxon>
        <taxon>Kitasatosporales</taxon>
        <taxon>Streptomycetaceae</taxon>
        <taxon>Streptomyces</taxon>
        <taxon>Streptomyces albidoflavus group</taxon>
    </lineage>
</organism>
<dbReference type="EMBL" id="AL939132">
    <property type="protein sequence ID" value="CAC16993.1"/>
    <property type="molecule type" value="Genomic_DNA"/>
</dbReference>
<dbReference type="RefSeq" id="NP_631700.1">
    <property type="nucleotide sequence ID" value="NC_003888.3"/>
</dbReference>
<dbReference type="RefSeq" id="WP_003971485.1">
    <property type="nucleotide sequence ID" value="NZ_VNID01000005.1"/>
</dbReference>
<dbReference type="PDB" id="1S5H">
    <property type="method" value="X-ray"/>
    <property type="resolution" value="2.20 A"/>
    <property type="chains" value="C=3-124"/>
</dbReference>
<dbReference type="PDB" id="2HFE">
    <property type="method" value="X-ray"/>
    <property type="resolution" value="2.25 A"/>
    <property type="chains" value="C=22-78, D=80-122"/>
</dbReference>
<dbReference type="PDB" id="6BY2">
    <property type="method" value="X-ray"/>
    <property type="resolution" value="2.35 A"/>
    <property type="chains" value="C=22-116"/>
</dbReference>
<dbReference type="PDB" id="6BY3">
    <property type="method" value="X-ray"/>
    <property type="resolution" value="2.37 A"/>
    <property type="chains" value="C=26-116"/>
</dbReference>
<dbReference type="PDB" id="7SQW">
    <property type="method" value="X-ray"/>
    <property type="resolution" value="3.21 A"/>
    <property type="chains" value="C=22-124"/>
</dbReference>
<dbReference type="PDBsum" id="1S5H"/>
<dbReference type="PDBsum" id="2HFE"/>
<dbReference type="PDBsum" id="6BY2"/>
<dbReference type="PDBsum" id="6BY3"/>
<dbReference type="PDBsum" id="7SQW"/>
<dbReference type="BMRB" id="P0A333"/>
<dbReference type="SMR" id="P0A333"/>
<dbReference type="STRING" id="100226.gene:17765320"/>
<dbReference type="DrugBank" id="DB07416">
    <property type="generic name" value="(2S)-2-(BUTYRYLOXY)-3-HYDROXYPROPYL NONANOATE"/>
</dbReference>
<dbReference type="PaxDb" id="100226-SCO7660"/>
<dbReference type="ABCD" id="P0A333">
    <property type="antibodies" value="1 sequenced antibody"/>
</dbReference>
<dbReference type="GeneID" id="91389048"/>
<dbReference type="KEGG" id="sco:SCO7660"/>
<dbReference type="PATRIC" id="fig|100226.15.peg.7779"/>
<dbReference type="eggNOG" id="COG1226">
    <property type="taxonomic scope" value="Bacteria"/>
</dbReference>
<dbReference type="HOGENOM" id="CLU_1618042_0_0_11"/>
<dbReference type="InParanoid" id="P0A333"/>
<dbReference type="OrthoDB" id="9799090at2"/>
<dbReference type="PhylomeDB" id="P0A333"/>
<dbReference type="EvolutionaryTrace" id="P0A333"/>
<dbReference type="Proteomes" id="UP000001973">
    <property type="component" value="Chromosome"/>
</dbReference>
<dbReference type="GO" id="GO:0008076">
    <property type="term" value="C:voltage-gated potassium channel complex"/>
    <property type="evidence" value="ECO:0007669"/>
    <property type="project" value="InterPro"/>
</dbReference>
<dbReference type="GO" id="GO:0005249">
    <property type="term" value="F:voltage-gated potassium channel activity"/>
    <property type="evidence" value="ECO:0007669"/>
    <property type="project" value="InterPro"/>
</dbReference>
<dbReference type="FunFam" id="1.20.5.110:FF:000071">
    <property type="entry name" value="pH-gated potassium channel KcsA"/>
    <property type="match status" value="1"/>
</dbReference>
<dbReference type="Gene3D" id="1.10.287.70">
    <property type="match status" value="1"/>
</dbReference>
<dbReference type="Gene3D" id="1.20.5.110">
    <property type="match status" value="1"/>
</dbReference>
<dbReference type="Gene3D" id="1.20.5.440">
    <property type="entry name" value="ATP synthase delta/epsilon subunit, C-terminal domain"/>
    <property type="match status" value="1"/>
</dbReference>
<dbReference type="InterPro" id="IPR013099">
    <property type="entry name" value="K_chnl_dom"/>
</dbReference>
<dbReference type="InterPro" id="IPR028325">
    <property type="entry name" value="VG_K_chnl"/>
</dbReference>
<dbReference type="PANTHER" id="PTHR11537:SF254">
    <property type="entry name" value="POTASSIUM VOLTAGE-GATED CHANNEL PROTEIN SHAB"/>
    <property type="match status" value="1"/>
</dbReference>
<dbReference type="PANTHER" id="PTHR11537">
    <property type="entry name" value="VOLTAGE-GATED POTASSIUM CHANNEL"/>
    <property type="match status" value="1"/>
</dbReference>
<dbReference type="Pfam" id="PF07885">
    <property type="entry name" value="Ion_trans_2"/>
    <property type="match status" value="1"/>
</dbReference>
<dbReference type="PRINTS" id="PR00169">
    <property type="entry name" value="KCHANNEL"/>
</dbReference>
<dbReference type="SUPFAM" id="SSF81324">
    <property type="entry name" value="Voltage-gated potassium channels"/>
    <property type="match status" value="1"/>
</dbReference>
<protein>
    <recommendedName>
        <fullName>pH-gated potassium channel KcsA</fullName>
    </recommendedName>
</protein>
<comment type="function">
    <text evidence="1">Acts as a pH-gated potassium ion channel; changing the cytosolic pH from 7 to 4 opens the channel.</text>
</comment>
<comment type="subunit">
    <text evidence="1">Homotetramer.</text>
</comment>
<comment type="subcellular location">
    <subcellularLocation>
        <location evidence="1">Cell membrane</location>
        <topology evidence="1">Multi-pass membrane protein</topology>
    </subcellularLocation>
</comment>
<comment type="domain">
    <text evidence="1">The cytoplasmic C-terminus is involved in the gating mechanism.</text>
</comment>
<comment type="miscellaneous">
    <text evidence="1">The amino acids 62-79 are situated in the membrane and are important for channel structure and properties.</text>
</comment>
<comment type="similarity">
    <text evidence="3">Belongs to the potassium channel family.</text>
</comment>
<feature type="chain" id="PRO_0000054101" description="pH-gated potassium channel KcsA">
    <location>
        <begin position="1"/>
        <end position="160"/>
    </location>
</feature>
<feature type="topological domain" description="Cytoplasmic" evidence="1">
    <location>
        <begin position="1"/>
        <end position="27"/>
    </location>
</feature>
<feature type="transmembrane region" description="Helical" evidence="1">
    <location>
        <begin position="28"/>
        <end position="50"/>
    </location>
</feature>
<feature type="topological domain" description="Extracellular" evidence="1">
    <location>
        <begin position="51"/>
        <end position="61"/>
    </location>
</feature>
<feature type="intramembrane region" description="Helical; Pore-forming" evidence="2">
    <location>
        <begin position="62"/>
        <end position="72"/>
    </location>
</feature>
<feature type="intramembrane region" description="Pore-forming" evidence="2">
    <location>
        <begin position="73"/>
        <end position="80"/>
    </location>
</feature>
<feature type="topological domain" description="Extracellular" evidence="1">
    <location>
        <begin position="81"/>
        <end position="87"/>
    </location>
</feature>
<feature type="transmembrane region" description="Helical" evidence="1">
    <location>
        <begin position="88"/>
        <end position="111"/>
    </location>
</feature>
<feature type="topological domain" description="Cytoplasmic" evidence="1">
    <location>
        <begin position="112"/>
        <end position="160"/>
    </location>
</feature>
<feature type="short sequence motif" description="Selectivity filter">
    <location>
        <begin position="75"/>
        <end position="80"/>
    </location>
</feature>
<feature type="helix" evidence="4">
    <location>
        <begin position="24"/>
        <end position="51"/>
    </location>
</feature>
<feature type="helix" evidence="4">
    <location>
        <begin position="62"/>
        <end position="73"/>
    </location>
</feature>
<feature type="strand" evidence="4">
    <location>
        <begin position="79"/>
        <end position="81"/>
    </location>
</feature>
<feature type="helix" evidence="4">
    <location>
        <begin position="86"/>
        <end position="121"/>
    </location>
</feature>
<accession>P0A333</accession>
<accession>Q54397</accession>